<protein>
    <recommendedName>
        <fullName evidence="1">L-2-hydroxyglutarate dehydrogenase</fullName>
        <shortName evidence="1">L2HG dehydrogenase</shortName>
        <ecNumber evidence="1">1.1.5.13</ecNumber>
    </recommendedName>
    <alternativeName>
        <fullName evidence="1">L2HG:quinone oxidoreductase</fullName>
    </alternativeName>
</protein>
<organism>
    <name type="scientific">Salmonella houtenae</name>
    <dbReference type="NCBI Taxonomy" id="59205"/>
    <lineage>
        <taxon>Bacteria</taxon>
        <taxon>Pseudomonadati</taxon>
        <taxon>Pseudomonadota</taxon>
        <taxon>Gammaproteobacteria</taxon>
        <taxon>Enterobacterales</taxon>
        <taxon>Enterobacteriaceae</taxon>
        <taxon>Salmonella</taxon>
    </lineage>
</organism>
<proteinExistence type="inferred from homology"/>
<reference key="1">
    <citation type="submission" date="2019-08" db="EMBL/GenBank/DDBJ databases">
        <authorList>
            <person name="Ashton P.M."/>
            <person name="Dallman T."/>
            <person name="Nair S."/>
            <person name="De Pinna E."/>
            <person name="Peters T."/>
            <person name="Grant K."/>
        </authorList>
    </citation>
    <scope>NUCLEOTIDE SEQUENCE [GENOMIC DNA]</scope>
    <source>
        <strain>779338</strain>
    </source>
</reference>
<reference key="2">
    <citation type="journal article" date="2021" name="PLoS Comput. Biol.">
        <title>Experimental and computational investigation of enzyme functional annotations uncovers misannotation in the EC 1.1.3.15 enzyme class.</title>
        <authorList>
            <person name="Rembeza E."/>
            <person name="Engqvist M.K.M."/>
        </authorList>
    </citation>
    <scope>FUNCTION</scope>
    <scope>IN VITRO ACTIVITY</scope>
</reference>
<sequence length="422" mass="46028">MYDFVIIGGGIIGMSTAMQLIDVYPDARIALLEKESAPACHQTGHNSGVIHAGVYYTPGSLKARFCLAGNLATKTFCDQNNIRYDTCGKMLVATSELEMARMRALWERTAANGLEREWLSAAELREREPNIIGLGGIFVPSSGIVSYRDVATAMANRFQAKGGEIIYHAEVSALTEHAAGVVIRTSQGREIETATLIGCAGLMADRLVKMLGVEPGFIICPFRGEYFRLAPRHNRIVNHLIYPIPDPAMPFLGVHLTRMIDGSVTVGPNAVLALKREGYRKRDVSFTDTLEVFRSAGIRRVLKNHLLSGLGEMKNSLCKSGYLRRVQKYCPSLTVNDLQPWPAGVRAQAVSPDGKLIDDFLFVATPRSIHTCNAPSPAATSAIPIGAHIVSKVQALRESQSNPGRTLRAARNVDTLHAAFTR</sequence>
<gene>
    <name evidence="3" type="primary">lhgO</name>
    <name evidence="1" type="synonym">lhgD</name>
    <name evidence="3" type="ORF">FRN20_18950</name>
</gene>
<feature type="chain" id="PRO_0000454865" description="L-2-hydroxyglutarate dehydrogenase">
    <location>
        <begin position="1"/>
        <end position="422"/>
    </location>
</feature>
<name>LHGD_SALHO</name>
<accession>A0A5Y6MCT2</accession>
<comment type="function">
    <text evidence="1 2">Catalyzes the dehydrogenation of L-2-hydroxyglutarate (L2HG) to alpha-ketoglutarate and couples to the respiratory chain by feeding electrons from the reaction into the membrane quinone pool. Functions in a L-lysine degradation pathway that proceeds via cadaverine, glutarate and L-2-hydroxyglutarate (By similarity). Also displays some oxidase activity in vitro on L-2-hydroxyglutarate with O2 as the electron acceptor, but this activity is most likely not physiological (PubMed:34555022).</text>
</comment>
<comment type="catalytic activity">
    <reaction evidence="1">
        <text>(S)-2-hydroxyglutarate + a quinone = a quinol + 2-oxoglutarate</text>
        <dbReference type="Rhea" id="RHEA:58664"/>
        <dbReference type="ChEBI" id="CHEBI:16782"/>
        <dbReference type="ChEBI" id="CHEBI:16810"/>
        <dbReference type="ChEBI" id="CHEBI:24646"/>
        <dbReference type="ChEBI" id="CHEBI:132124"/>
        <dbReference type="EC" id="1.1.5.13"/>
    </reaction>
</comment>
<comment type="cofactor">
    <cofactor evidence="1">
        <name>FAD</name>
        <dbReference type="ChEBI" id="CHEBI:57692"/>
    </cofactor>
</comment>
<comment type="pathway">
    <text evidence="1">Amino-acid degradation.</text>
</comment>
<comment type="subcellular location">
    <subcellularLocation>
        <location evidence="1">Cell inner membrane</location>
    </subcellularLocation>
</comment>
<comment type="similarity">
    <text evidence="1">Belongs to the L2HGDH family.</text>
</comment>
<dbReference type="EC" id="1.1.5.13" evidence="1"/>
<dbReference type="EMBL" id="AAJCYV010000028">
    <property type="protein sequence ID" value="ECK7332852.1"/>
    <property type="molecule type" value="Genomic_DNA"/>
</dbReference>
<dbReference type="SMR" id="A0A5Y6MCT2"/>
<dbReference type="GO" id="GO:0005737">
    <property type="term" value="C:cytoplasm"/>
    <property type="evidence" value="ECO:0007669"/>
    <property type="project" value="TreeGrafter"/>
</dbReference>
<dbReference type="GO" id="GO:0005886">
    <property type="term" value="C:plasma membrane"/>
    <property type="evidence" value="ECO:0007669"/>
    <property type="project" value="UniProtKB-SubCell"/>
</dbReference>
<dbReference type="GO" id="GO:0140696">
    <property type="term" value="F:(S)-2-hydroxyglutarate dehydrogenase activity"/>
    <property type="evidence" value="ECO:0007669"/>
    <property type="project" value="UniProtKB-EC"/>
</dbReference>
<dbReference type="GO" id="GO:0047545">
    <property type="term" value="F:2-hydroxyglutarate dehydrogenase activity"/>
    <property type="evidence" value="ECO:0007669"/>
    <property type="project" value="UniProtKB-UniRule"/>
</dbReference>
<dbReference type="GO" id="GO:0050660">
    <property type="term" value="F:flavin adenine dinucleotide binding"/>
    <property type="evidence" value="ECO:0007669"/>
    <property type="project" value="UniProtKB-UniRule"/>
</dbReference>
<dbReference type="GO" id="GO:0019477">
    <property type="term" value="P:L-lysine catabolic process"/>
    <property type="evidence" value="ECO:0007669"/>
    <property type="project" value="UniProtKB-UniRule"/>
</dbReference>
<dbReference type="Gene3D" id="3.30.9.10">
    <property type="entry name" value="D-Amino Acid Oxidase, subunit A, domain 2"/>
    <property type="match status" value="1"/>
</dbReference>
<dbReference type="Gene3D" id="3.50.50.60">
    <property type="entry name" value="FAD/NAD(P)-binding domain"/>
    <property type="match status" value="1"/>
</dbReference>
<dbReference type="HAMAP" id="MF_00990">
    <property type="entry name" value="L_hydroxyglutarate_dehydrogenase"/>
    <property type="match status" value="1"/>
</dbReference>
<dbReference type="InterPro" id="IPR006076">
    <property type="entry name" value="FAD-dep_OxRdtase"/>
</dbReference>
<dbReference type="InterPro" id="IPR036188">
    <property type="entry name" value="FAD/NAD-bd_sf"/>
</dbReference>
<dbReference type="InterPro" id="IPR030862">
    <property type="entry name" value="L2HG_DH_bact"/>
</dbReference>
<dbReference type="NCBIfam" id="NF008726">
    <property type="entry name" value="PRK11728.1"/>
    <property type="match status" value="1"/>
</dbReference>
<dbReference type="PANTHER" id="PTHR43104">
    <property type="entry name" value="L-2-HYDROXYGLUTARATE DEHYDROGENASE, MITOCHONDRIAL"/>
    <property type="match status" value="1"/>
</dbReference>
<dbReference type="PANTHER" id="PTHR43104:SF2">
    <property type="entry name" value="L-2-HYDROXYGLUTARATE DEHYDROGENASE, MITOCHONDRIAL"/>
    <property type="match status" value="1"/>
</dbReference>
<dbReference type="Pfam" id="PF01266">
    <property type="entry name" value="DAO"/>
    <property type="match status" value="1"/>
</dbReference>
<dbReference type="SUPFAM" id="SSF51905">
    <property type="entry name" value="FAD/NAD(P)-binding domain"/>
    <property type="match status" value="1"/>
</dbReference>
<evidence type="ECO:0000255" key="1">
    <source>
        <dbReference type="HAMAP-Rule" id="MF_00990"/>
    </source>
</evidence>
<evidence type="ECO:0000269" key="2">
    <source>
    </source>
</evidence>
<evidence type="ECO:0000312" key="3">
    <source>
        <dbReference type="EMBL" id="ECK7332852.1"/>
    </source>
</evidence>
<keyword id="KW-0997">Cell inner membrane</keyword>
<keyword id="KW-1003">Cell membrane</keyword>
<keyword id="KW-0249">Electron transport</keyword>
<keyword id="KW-0274">FAD</keyword>
<keyword id="KW-0285">Flavoprotein</keyword>
<keyword id="KW-0472">Membrane</keyword>
<keyword id="KW-0560">Oxidoreductase</keyword>
<keyword id="KW-0813">Transport</keyword>